<protein>
    <recommendedName>
        <fullName evidence="1">5-methyltetrahydropteroyltriglutamate--homocysteine methyltransferase</fullName>
        <ecNumber evidence="1">2.1.1.14</ecNumber>
    </recommendedName>
    <alternativeName>
        <fullName evidence="1">Cobalamin-independent methionine synthase</fullName>
    </alternativeName>
    <alternativeName>
        <fullName evidence="1">Methionine synthase, vitamin-B12 independent isozyme</fullName>
    </alternativeName>
</protein>
<organism>
    <name type="scientific">Desulforamulus reducens (strain ATCC BAA-1160 / DSM 100696 / MI-1)</name>
    <name type="common">Desulfotomaculum reducens</name>
    <dbReference type="NCBI Taxonomy" id="349161"/>
    <lineage>
        <taxon>Bacteria</taxon>
        <taxon>Bacillati</taxon>
        <taxon>Bacillota</taxon>
        <taxon>Clostridia</taxon>
        <taxon>Eubacteriales</taxon>
        <taxon>Peptococcaceae</taxon>
        <taxon>Desulforamulus</taxon>
    </lineage>
</organism>
<reference key="1">
    <citation type="submission" date="2007-03" db="EMBL/GenBank/DDBJ databases">
        <title>Complete sequence of Desulfotomaculum reducens MI-1.</title>
        <authorList>
            <consortium name="US DOE Joint Genome Institute"/>
            <person name="Copeland A."/>
            <person name="Lucas S."/>
            <person name="Lapidus A."/>
            <person name="Barry K."/>
            <person name="Detter J.C."/>
            <person name="Glavina del Rio T."/>
            <person name="Hammon N."/>
            <person name="Israni S."/>
            <person name="Dalin E."/>
            <person name="Tice H."/>
            <person name="Pitluck S."/>
            <person name="Sims D."/>
            <person name="Brettin T."/>
            <person name="Bruce D."/>
            <person name="Han C."/>
            <person name="Tapia R."/>
            <person name="Schmutz J."/>
            <person name="Larimer F."/>
            <person name="Land M."/>
            <person name="Hauser L."/>
            <person name="Kyrpides N."/>
            <person name="Kim E."/>
            <person name="Tebo B.M."/>
            <person name="Richardson P."/>
        </authorList>
    </citation>
    <scope>NUCLEOTIDE SEQUENCE [LARGE SCALE GENOMIC DNA]</scope>
    <source>
        <strain>ATCC BAA-1160 / DSM 100696 / MI-1</strain>
    </source>
</reference>
<gene>
    <name evidence="1" type="primary">metE</name>
    <name type="ordered locus">Dred_1751</name>
</gene>
<evidence type="ECO:0000255" key="1">
    <source>
        <dbReference type="HAMAP-Rule" id="MF_00172"/>
    </source>
</evidence>
<dbReference type="EC" id="2.1.1.14" evidence="1"/>
<dbReference type="EMBL" id="CP000612">
    <property type="protein sequence ID" value="ABO50276.1"/>
    <property type="molecule type" value="Genomic_DNA"/>
</dbReference>
<dbReference type="RefSeq" id="WP_011878090.1">
    <property type="nucleotide sequence ID" value="NC_009253.1"/>
</dbReference>
<dbReference type="SMR" id="A4J5C3"/>
<dbReference type="STRING" id="349161.Dred_1751"/>
<dbReference type="KEGG" id="drm:Dred_1751"/>
<dbReference type="eggNOG" id="COG0620">
    <property type="taxonomic scope" value="Bacteria"/>
</dbReference>
<dbReference type="HOGENOM" id="CLU_013175_0_0_9"/>
<dbReference type="OrthoDB" id="244285at2"/>
<dbReference type="UniPathway" id="UPA00051">
    <property type="reaction ID" value="UER00082"/>
</dbReference>
<dbReference type="Proteomes" id="UP000001556">
    <property type="component" value="Chromosome"/>
</dbReference>
<dbReference type="GO" id="GO:0003871">
    <property type="term" value="F:5-methyltetrahydropteroyltriglutamate-homocysteine S-methyltransferase activity"/>
    <property type="evidence" value="ECO:0007669"/>
    <property type="project" value="UniProtKB-UniRule"/>
</dbReference>
<dbReference type="GO" id="GO:0008270">
    <property type="term" value="F:zinc ion binding"/>
    <property type="evidence" value="ECO:0007669"/>
    <property type="project" value="InterPro"/>
</dbReference>
<dbReference type="GO" id="GO:0009086">
    <property type="term" value="P:methionine biosynthetic process"/>
    <property type="evidence" value="ECO:0007669"/>
    <property type="project" value="UniProtKB-UniRule"/>
</dbReference>
<dbReference type="GO" id="GO:0032259">
    <property type="term" value="P:methylation"/>
    <property type="evidence" value="ECO:0007669"/>
    <property type="project" value="UniProtKB-KW"/>
</dbReference>
<dbReference type="CDD" id="cd03311">
    <property type="entry name" value="CIMS_C_terminal_like"/>
    <property type="match status" value="1"/>
</dbReference>
<dbReference type="CDD" id="cd03312">
    <property type="entry name" value="CIMS_N_terminal_like"/>
    <property type="match status" value="1"/>
</dbReference>
<dbReference type="Gene3D" id="3.20.20.210">
    <property type="match status" value="2"/>
</dbReference>
<dbReference type="HAMAP" id="MF_00172">
    <property type="entry name" value="Meth_synth"/>
    <property type="match status" value="1"/>
</dbReference>
<dbReference type="InterPro" id="IPR013215">
    <property type="entry name" value="Cbl-indep_Met_Synth_N"/>
</dbReference>
<dbReference type="InterPro" id="IPR006276">
    <property type="entry name" value="Cobalamin-indep_Met_synthase"/>
</dbReference>
<dbReference type="InterPro" id="IPR002629">
    <property type="entry name" value="Met_Synth_C/arc"/>
</dbReference>
<dbReference type="InterPro" id="IPR038071">
    <property type="entry name" value="UROD/MetE-like_sf"/>
</dbReference>
<dbReference type="NCBIfam" id="TIGR01371">
    <property type="entry name" value="met_syn_B12ind"/>
    <property type="match status" value="1"/>
</dbReference>
<dbReference type="NCBIfam" id="NF003556">
    <property type="entry name" value="PRK05222.1"/>
    <property type="match status" value="1"/>
</dbReference>
<dbReference type="PANTHER" id="PTHR30519">
    <property type="entry name" value="5-METHYLTETRAHYDROPTEROYLTRIGLUTAMATE--HOMOCYSTEINE METHYLTRANSFERASE"/>
    <property type="match status" value="1"/>
</dbReference>
<dbReference type="Pfam" id="PF08267">
    <property type="entry name" value="Meth_synt_1"/>
    <property type="match status" value="1"/>
</dbReference>
<dbReference type="Pfam" id="PF01717">
    <property type="entry name" value="Meth_synt_2"/>
    <property type="match status" value="1"/>
</dbReference>
<dbReference type="PIRSF" id="PIRSF000382">
    <property type="entry name" value="MeTrfase_B12_ind"/>
    <property type="match status" value="1"/>
</dbReference>
<dbReference type="SUPFAM" id="SSF51726">
    <property type="entry name" value="UROD/MetE-like"/>
    <property type="match status" value="2"/>
</dbReference>
<proteinExistence type="inferred from homology"/>
<sequence length="764" mass="88373">MYTGATTYVVGFPRIGEQRELKKVLERYWDQKTSFSEIDEIAKNLRRRHWLYQKEAGISFISSNDFSLYDNMLDTAIMLNAVPERFSNIHDKQELYFAMARGTNNTVAMEMTKWFNTNYHYIVPELSDTMNFSLCADKIINEYREAKEYGLRTKINLIGPITFLSLSKPVDGNQDTLELLPKILPCYVSLLKKIADLDDEVYIQFDEPIVVKDIDRRTLNLFYLCYKELSNVSNRLRLIVMTYFDHAVEAVKILSDIPIYGIGLDFVYGQENLKVLDSLNGKKLIAGVIDGRNIWKNNYHNTLTLLKDIEKNVKKEDIILSTTCSLLHVPYSLKHENHLDKDIKSWMSFAREKLDELSDLAKLFFVENNSEDILTILENNQRIFREKQQSSKVIDPIVRERVGNIKRRERDGSFNDRNEAQRKKLDLPLLPTTTIGSFPQTEEIRKLRRDFKNNVISQIEYDTGIKNYIDSCIQFQEDIGLDVLVHGEPERNDMVEYFGERLSGFVFTQNGWVQSYGSRCVKPTVIFGDVSRPKPMTIDTILYAKSKTNKIVKGMLTGPVTILNWSYCRSDMERSAVCEQIALAIRDEINDLQKAGIKIIQVDEAAFKEGYPLRKEKVAYYENWAVKSFKLAVSSAAIETQIHTHMCYSDFNDIIHTIEKMDADVITIETSRSGNKLLTVFATRGYKNEIGPGIYDIHSPRVPSVEELEEKIRNLMLVLPPSKLWINPDCGLKTRKWDEIRWSLSNMVKAAQHIRLGLQRVMFV</sequence>
<feature type="chain" id="PRO_1000071611" description="5-methyltetrahydropteroyltriglutamate--homocysteine methyltransferase">
    <location>
        <begin position="1"/>
        <end position="764"/>
    </location>
</feature>
<feature type="active site" description="Proton donor" evidence="1">
    <location>
        <position position="698"/>
    </location>
</feature>
<feature type="binding site" evidence="1">
    <location>
        <begin position="19"/>
        <end position="22"/>
    </location>
    <ligand>
        <name>5-methyltetrahydropteroyltri-L-glutamate</name>
        <dbReference type="ChEBI" id="CHEBI:58207"/>
    </ligand>
</feature>
<feature type="binding site" evidence="1">
    <location>
        <position position="113"/>
    </location>
    <ligand>
        <name>5-methyltetrahydropteroyltri-L-glutamate</name>
        <dbReference type="ChEBI" id="CHEBI:58207"/>
    </ligand>
</feature>
<feature type="binding site" evidence="1">
    <location>
        <begin position="435"/>
        <end position="437"/>
    </location>
    <ligand>
        <name>L-homocysteine</name>
        <dbReference type="ChEBI" id="CHEBI:58199"/>
    </ligand>
</feature>
<feature type="binding site" evidence="1">
    <location>
        <begin position="435"/>
        <end position="437"/>
    </location>
    <ligand>
        <name>L-methionine</name>
        <dbReference type="ChEBI" id="CHEBI:57844"/>
    </ligand>
</feature>
<feature type="binding site" evidence="1">
    <location>
        <position position="488"/>
    </location>
    <ligand>
        <name>L-homocysteine</name>
        <dbReference type="ChEBI" id="CHEBI:58199"/>
    </ligand>
</feature>
<feature type="binding site" evidence="1">
    <location>
        <position position="488"/>
    </location>
    <ligand>
        <name>L-methionine</name>
        <dbReference type="ChEBI" id="CHEBI:57844"/>
    </ligand>
</feature>
<feature type="binding site" evidence="1">
    <location>
        <begin position="519"/>
        <end position="520"/>
    </location>
    <ligand>
        <name>5-methyltetrahydropteroyltri-L-glutamate</name>
        <dbReference type="ChEBI" id="CHEBI:58207"/>
    </ligand>
</feature>
<feature type="binding site" evidence="1">
    <location>
        <position position="565"/>
    </location>
    <ligand>
        <name>5-methyltetrahydropteroyltri-L-glutamate</name>
        <dbReference type="ChEBI" id="CHEBI:58207"/>
    </ligand>
</feature>
<feature type="binding site" evidence="1">
    <location>
        <position position="603"/>
    </location>
    <ligand>
        <name>L-homocysteine</name>
        <dbReference type="ChEBI" id="CHEBI:58199"/>
    </ligand>
</feature>
<feature type="binding site" evidence="1">
    <location>
        <position position="603"/>
    </location>
    <ligand>
        <name>L-methionine</name>
        <dbReference type="ChEBI" id="CHEBI:57844"/>
    </ligand>
</feature>
<feature type="binding site" evidence="1">
    <location>
        <position position="609"/>
    </location>
    <ligand>
        <name>5-methyltetrahydropteroyltri-L-glutamate</name>
        <dbReference type="ChEBI" id="CHEBI:58207"/>
    </ligand>
</feature>
<feature type="binding site" evidence="1">
    <location>
        <position position="645"/>
    </location>
    <ligand>
        <name>Zn(2+)</name>
        <dbReference type="ChEBI" id="CHEBI:29105"/>
        <note>catalytic</note>
    </ligand>
</feature>
<feature type="binding site" evidence="1">
    <location>
        <position position="647"/>
    </location>
    <ligand>
        <name>Zn(2+)</name>
        <dbReference type="ChEBI" id="CHEBI:29105"/>
        <note>catalytic</note>
    </ligand>
</feature>
<feature type="binding site" evidence="1">
    <location>
        <position position="669"/>
    </location>
    <ligand>
        <name>Zn(2+)</name>
        <dbReference type="ChEBI" id="CHEBI:29105"/>
        <note>catalytic</note>
    </ligand>
</feature>
<feature type="binding site" evidence="1">
    <location>
        <position position="730"/>
    </location>
    <ligand>
        <name>Zn(2+)</name>
        <dbReference type="ChEBI" id="CHEBI:29105"/>
        <note>catalytic</note>
    </ligand>
</feature>
<accession>A4J5C3</accession>
<name>METE_DESRM</name>
<keyword id="KW-0028">Amino-acid biosynthesis</keyword>
<keyword id="KW-0479">Metal-binding</keyword>
<keyword id="KW-0486">Methionine biosynthesis</keyword>
<keyword id="KW-0489">Methyltransferase</keyword>
<keyword id="KW-1185">Reference proteome</keyword>
<keyword id="KW-0677">Repeat</keyword>
<keyword id="KW-0808">Transferase</keyword>
<keyword id="KW-0862">Zinc</keyword>
<comment type="function">
    <text evidence="1">Catalyzes the transfer of a methyl group from 5-methyltetrahydrofolate to homocysteine resulting in methionine formation.</text>
</comment>
<comment type="catalytic activity">
    <reaction evidence="1">
        <text>5-methyltetrahydropteroyltri-L-glutamate + L-homocysteine = tetrahydropteroyltri-L-glutamate + L-methionine</text>
        <dbReference type="Rhea" id="RHEA:21196"/>
        <dbReference type="ChEBI" id="CHEBI:57844"/>
        <dbReference type="ChEBI" id="CHEBI:58140"/>
        <dbReference type="ChEBI" id="CHEBI:58199"/>
        <dbReference type="ChEBI" id="CHEBI:58207"/>
        <dbReference type="EC" id="2.1.1.14"/>
    </reaction>
</comment>
<comment type="cofactor">
    <cofactor evidence="1">
        <name>Zn(2+)</name>
        <dbReference type="ChEBI" id="CHEBI:29105"/>
    </cofactor>
    <text evidence="1">Binds 1 zinc ion per subunit.</text>
</comment>
<comment type="pathway">
    <text evidence="1">Amino-acid biosynthesis; L-methionine biosynthesis via de novo pathway; L-methionine from L-homocysteine (MetE route): step 1/1.</text>
</comment>
<comment type="similarity">
    <text evidence="1">Belongs to the vitamin-B12 independent methionine synthase family.</text>
</comment>